<dbReference type="EMBL" id="AF152555">
    <property type="protein sequence ID" value="AAD34162.1"/>
    <property type="molecule type" value="mRNA"/>
</dbReference>
<dbReference type="EMBL" id="AB022211">
    <property type="protein sequence ID" value="BAB10714.1"/>
    <property type="molecule type" value="Genomic_DNA"/>
</dbReference>
<dbReference type="EMBL" id="CP002688">
    <property type="protein sequence ID" value="AED98202.1"/>
    <property type="molecule type" value="Genomic_DNA"/>
</dbReference>
<dbReference type="EMBL" id="AB493816">
    <property type="protein sequence ID" value="BAH30654.1"/>
    <property type="molecule type" value="mRNA"/>
</dbReference>
<dbReference type="RefSeq" id="NP_201436.1">
    <property type="nucleotide sequence ID" value="NM_126033.2"/>
</dbReference>
<dbReference type="BioGRID" id="22009">
    <property type="interactions" value="16"/>
</dbReference>
<dbReference type="FunCoup" id="Q9XGX0">
    <property type="interactions" value="168"/>
</dbReference>
<dbReference type="IntAct" id="Q9XGX0">
    <property type="interactions" value="16"/>
</dbReference>
<dbReference type="STRING" id="3702.Q9XGX0"/>
<dbReference type="PaxDb" id="3702-AT5G66350.1"/>
<dbReference type="ProteomicsDB" id="234492"/>
<dbReference type="EnsemblPlants" id="AT5G66350.1">
    <property type="protein sequence ID" value="AT5G66350.1"/>
    <property type="gene ID" value="AT5G66350"/>
</dbReference>
<dbReference type="GeneID" id="836767"/>
<dbReference type="Gramene" id="AT5G66350.1">
    <property type="protein sequence ID" value="AT5G66350.1"/>
    <property type="gene ID" value="AT5G66350"/>
</dbReference>
<dbReference type="KEGG" id="ath:AT5G66350"/>
<dbReference type="Araport" id="AT5G66350"/>
<dbReference type="TAIR" id="AT5G66350">
    <property type="gene designation" value="SHI"/>
</dbReference>
<dbReference type="eggNOG" id="ENOG502QQ15">
    <property type="taxonomic scope" value="Eukaryota"/>
</dbReference>
<dbReference type="HOGENOM" id="CLU_041493_1_0_1"/>
<dbReference type="InParanoid" id="Q9XGX0"/>
<dbReference type="OMA" id="CTHNTLG"/>
<dbReference type="PhylomeDB" id="Q9XGX0"/>
<dbReference type="PRO" id="PR:Q9XGX0"/>
<dbReference type="Proteomes" id="UP000006548">
    <property type="component" value="Chromosome 5"/>
</dbReference>
<dbReference type="ExpressionAtlas" id="Q9XGX0">
    <property type="expression patterns" value="baseline and differential"/>
</dbReference>
<dbReference type="GO" id="GO:0005634">
    <property type="term" value="C:nucleus"/>
    <property type="evidence" value="ECO:0000250"/>
    <property type="project" value="UniProtKB"/>
</dbReference>
<dbReference type="GO" id="GO:0003700">
    <property type="term" value="F:DNA-binding transcription factor activity"/>
    <property type="evidence" value="ECO:0000304"/>
    <property type="project" value="TAIR"/>
</dbReference>
<dbReference type="GO" id="GO:0046872">
    <property type="term" value="F:metal ion binding"/>
    <property type="evidence" value="ECO:0007669"/>
    <property type="project" value="UniProtKB-KW"/>
</dbReference>
<dbReference type="GO" id="GO:0046982">
    <property type="term" value="F:protein heterodimerization activity"/>
    <property type="evidence" value="ECO:0000353"/>
    <property type="project" value="TAIR"/>
</dbReference>
<dbReference type="GO" id="GO:0000976">
    <property type="term" value="F:transcription cis-regulatory region binding"/>
    <property type="evidence" value="ECO:0000353"/>
    <property type="project" value="TAIR"/>
</dbReference>
<dbReference type="GO" id="GO:0048653">
    <property type="term" value="P:anther development"/>
    <property type="evidence" value="ECO:0000316"/>
    <property type="project" value="TAIR"/>
</dbReference>
<dbReference type="GO" id="GO:0009851">
    <property type="term" value="P:auxin biosynthetic process"/>
    <property type="evidence" value="ECO:0007669"/>
    <property type="project" value="UniProtKB-KW"/>
</dbReference>
<dbReference type="GO" id="GO:0009734">
    <property type="term" value="P:auxin-activated signaling pathway"/>
    <property type="evidence" value="ECO:0007669"/>
    <property type="project" value="UniProtKB-KW"/>
</dbReference>
<dbReference type="GO" id="GO:0009740">
    <property type="term" value="P:gibberellic acid mediated signaling pathway"/>
    <property type="evidence" value="ECO:0000304"/>
    <property type="project" value="TAIR"/>
</dbReference>
<dbReference type="GO" id="GO:0009938">
    <property type="term" value="P:negative regulation of gibberellic acid mediated signaling pathway"/>
    <property type="evidence" value="ECO:0000314"/>
    <property type="project" value="UniProtKB"/>
</dbReference>
<dbReference type="GO" id="GO:0009555">
    <property type="term" value="P:pollen development"/>
    <property type="evidence" value="ECO:0000316"/>
    <property type="project" value="TAIR"/>
</dbReference>
<dbReference type="GO" id="GO:0009739">
    <property type="term" value="P:response to gibberellin"/>
    <property type="evidence" value="ECO:0000315"/>
    <property type="project" value="TAIR"/>
</dbReference>
<dbReference type="InterPro" id="IPR007818">
    <property type="entry name" value="SHI"/>
</dbReference>
<dbReference type="InterPro" id="IPR006511">
    <property type="entry name" value="SHI_C"/>
</dbReference>
<dbReference type="InterPro" id="IPR006510">
    <property type="entry name" value="Znf_LRP1"/>
</dbReference>
<dbReference type="NCBIfam" id="TIGR01624">
    <property type="entry name" value="LRP1_Cterm"/>
    <property type="match status" value="1"/>
</dbReference>
<dbReference type="NCBIfam" id="TIGR01623">
    <property type="entry name" value="put_zinc_LRP1"/>
    <property type="match status" value="1"/>
</dbReference>
<dbReference type="PANTHER" id="PTHR31604">
    <property type="entry name" value="PROTEIN LATERAL ROOT PRIMORDIUM 1"/>
    <property type="match status" value="1"/>
</dbReference>
<dbReference type="PANTHER" id="PTHR31604:SF4">
    <property type="entry name" value="PROTEIN SHORT INTERNODES"/>
    <property type="match status" value="1"/>
</dbReference>
<dbReference type="Pfam" id="PF05142">
    <property type="entry name" value="DUF702"/>
    <property type="match status" value="1"/>
</dbReference>
<keyword id="KW-0010">Activator</keyword>
<keyword id="KW-0073">Auxin biosynthesis</keyword>
<keyword id="KW-0927">Auxin signaling pathway</keyword>
<keyword id="KW-0217">Developmental protein</keyword>
<keyword id="KW-0238">DNA-binding</keyword>
<keyword id="KW-0939">Gibberellin signaling pathway</keyword>
<keyword id="KW-0479">Metal-binding</keyword>
<keyword id="KW-0539">Nucleus</keyword>
<keyword id="KW-1185">Reference proteome</keyword>
<keyword id="KW-0804">Transcription</keyword>
<keyword id="KW-0805">Transcription regulation</keyword>
<keyword id="KW-0862">Zinc</keyword>
<accession>Q9XGX0</accession>
<protein>
    <recommendedName>
        <fullName>Protein SHORT INTERNODES</fullName>
    </recommendedName>
</protein>
<organism>
    <name type="scientific">Arabidopsis thaliana</name>
    <name type="common">Mouse-ear cress</name>
    <dbReference type="NCBI Taxonomy" id="3702"/>
    <lineage>
        <taxon>Eukaryota</taxon>
        <taxon>Viridiplantae</taxon>
        <taxon>Streptophyta</taxon>
        <taxon>Embryophyta</taxon>
        <taxon>Tracheophyta</taxon>
        <taxon>Spermatophyta</taxon>
        <taxon>Magnoliopsida</taxon>
        <taxon>eudicotyledons</taxon>
        <taxon>Gunneridae</taxon>
        <taxon>Pentapetalae</taxon>
        <taxon>rosids</taxon>
        <taxon>malvids</taxon>
        <taxon>Brassicales</taxon>
        <taxon>Brassicaceae</taxon>
        <taxon>Camelineae</taxon>
        <taxon>Arabidopsis</taxon>
    </lineage>
</organism>
<gene>
    <name type="primary">SHI</name>
    <name type="ordered locus">At5g66350</name>
</gene>
<feature type="chain" id="PRO_0000424581" description="Protein SHORT INTERNODES">
    <location>
        <begin position="1"/>
        <end position="331"/>
    </location>
</feature>
<feature type="DNA-binding region" description="Zn(2)-C6 fungal-type; degenerate">
    <location>
        <begin position="120"/>
        <end position="147"/>
    </location>
</feature>
<feature type="region of interest" description="Disordered" evidence="2">
    <location>
        <begin position="1"/>
        <end position="50"/>
    </location>
</feature>
<feature type="region of interest" description="Disordered" evidence="2">
    <location>
        <begin position="158"/>
        <end position="194"/>
    </location>
</feature>
<feature type="region of interest" description="Disordered" evidence="2">
    <location>
        <begin position="261"/>
        <end position="290"/>
    </location>
</feature>
<feature type="short sequence motif" description="Required for homo- and heterodimerization" evidence="1">
    <location>
        <begin position="247"/>
        <end position="250"/>
    </location>
</feature>
<feature type="compositionally biased region" description="Polar residues" evidence="2">
    <location>
        <begin position="21"/>
        <end position="32"/>
    </location>
</feature>
<feature type="compositionally biased region" description="Low complexity" evidence="2">
    <location>
        <begin position="166"/>
        <end position="180"/>
    </location>
</feature>
<feature type="compositionally biased region" description="Low complexity" evidence="2">
    <location>
        <begin position="278"/>
        <end position="290"/>
    </location>
</feature>
<feature type="binding site" evidence="1">
    <location>
        <position position="120"/>
    </location>
    <ligand>
        <name>Zn(2+)</name>
        <dbReference type="ChEBI" id="CHEBI:29105"/>
        <label>1</label>
    </ligand>
</feature>
<feature type="binding site" evidence="1">
    <location>
        <position position="120"/>
    </location>
    <ligand>
        <name>Zn(2+)</name>
        <dbReference type="ChEBI" id="CHEBI:29105"/>
        <label>2</label>
    </ligand>
</feature>
<feature type="binding site" evidence="1">
    <location>
        <position position="123"/>
    </location>
    <ligand>
        <name>Zn(2+)</name>
        <dbReference type="ChEBI" id="CHEBI:29105"/>
        <label>1</label>
    </ligand>
</feature>
<feature type="binding site" evidence="1">
    <location>
        <position position="131"/>
    </location>
    <ligand>
        <name>Zn(2+)</name>
        <dbReference type="ChEBI" id="CHEBI:29105"/>
        <label>1</label>
    </ligand>
</feature>
<feature type="binding site" evidence="1">
    <location>
        <position position="136"/>
    </location>
    <ligand>
        <name>Zn(2+)</name>
        <dbReference type="ChEBI" id="CHEBI:29105"/>
        <label>1</label>
    </ligand>
</feature>
<feature type="binding site" evidence="1">
    <location>
        <position position="136"/>
    </location>
    <ligand>
        <name>Zn(2+)</name>
        <dbReference type="ChEBI" id="CHEBI:29105"/>
        <label>2</label>
    </ligand>
</feature>
<feature type="binding site" evidence="1">
    <location>
        <position position="140"/>
    </location>
    <ligand>
        <name>Zn(2+)</name>
        <dbReference type="ChEBI" id="CHEBI:29105"/>
        <label>2</label>
    </ligand>
</feature>
<feature type="binding site" evidence="1">
    <location>
        <position position="147"/>
    </location>
    <ligand>
        <name>Zn(2+)</name>
        <dbReference type="ChEBI" id="CHEBI:29105"/>
        <label>2</label>
    </ligand>
</feature>
<reference key="1">
    <citation type="journal article" date="1999" name="Plant Cell">
        <title>The Arabidopsis dwarf mutant shi exhibits reduced gibberellin responses conferred by overexpression of a new putative zinc finger protein.</title>
        <authorList>
            <person name="Fridborg I."/>
            <person name="Kuusk S."/>
            <person name="Moritz T."/>
            <person name="Sundberg E."/>
        </authorList>
    </citation>
    <scope>NUCLEOTIDE SEQUENCE [MRNA]</scope>
    <scope>FUNCTION</scope>
    <scope>DISRUPTION PHENOTYPE</scope>
    <scope>TISSUE SPECIFICITY</scope>
    <source>
        <strain>cv. Columbia</strain>
        <strain>cv. Landsberg erecta</strain>
    </source>
</reference>
<reference key="2">
    <citation type="journal article" date="2000" name="DNA Res.">
        <title>Structural analysis of Arabidopsis thaliana chromosome 5. X. Sequence features of the regions of 3,076,755 bp covered by sixty P1 and TAC clones.</title>
        <authorList>
            <person name="Sato S."/>
            <person name="Nakamura Y."/>
            <person name="Kaneko T."/>
            <person name="Katoh T."/>
            <person name="Asamizu E."/>
            <person name="Kotani H."/>
            <person name="Tabata S."/>
        </authorList>
    </citation>
    <scope>NUCLEOTIDE SEQUENCE [LARGE SCALE GENOMIC DNA]</scope>
    <source>
        <strain>cv. Columbia</strain>
    </source>
</reference>
<reference key="3">
    <citation type="journal article" date="2017" name="Plant J.">
        <title>Araport11: a complete reannotation of the Arabidopsis thaliana reference genome.</title>
        <authorList>
            <person name="Cheng C.Y."/>
            <person name="Krishnakumar V."/>
            <person name="Chan A.P."/>
            <person name="Thibaud-Nissen F."/>
            <person name="Schobel S."/>
            <person name="Town C.D."/>
        </authorList>
    </citation>
    <scope>GENOME REANNOTATION</scope>
    <source>
        <strain>cv. Columbia</strain>
    </source>
</reference>
<reference key="4">
    <citation type="submission" date="2009-03" db="EMBL/GenBank/DDBJ databases">
        <title>ORF cloning and analysis of Arabidopsis transcription factor genes.</title>
        <authorList>
            <person name="Fujita M."/>
            <person name="Mizukado S."/>
            <person name="Seki M."/>
            <person name="Shinozaki K."/>
            <person name="Mitsuda N."/>
            <person name="Takiguchi Y."/>
            <person name="Takagi M."/>
        </authorList>
    </citation>
    <scope>NUCLEOTIDE SEQUENCE [LARGE SCALE MRNA]</scope>
</reference>
<reference key="5">
    <citation type="journal article" date="2001" name="Plant Physiol.">
        <title>The Arabidopsis protein SHI represses gibberellin responses in Arabidopsis and barley.</title>
        <authorList>
            <person name="Fridborg I."/>
            <person name="Kuusk S."/>
            <person name="Robertson M."/>
            <person name="Sundberg E."/>
        </authorList>
    </citation>
    <scope>FUNCTION</scope>
    <scope>DISRUPTION PHENOTYPE</scope>
    <scope>TISSUE SPECIFICITY</scope>
    <scope>DEVELOPMENTAL STAGE</scope>
</reference>
<reference key="6">
    <citation type="journal article" date="2006" name="Plant J.">
        <title>Functionally redundant SHI family genes regulate Arabidopsis gynoecium development in a dose-dependent manner.</title>
        <authorList>
            <person name="Kuusk S."/>
            <person name="Sohlberg J.J."/>
            <person name="Magnus Eklund D."/>
            <person name="Sundberg E."/>
        </authorList>
    </citation>
    <scope>FUNCTION</scope>
    <scope>DISRUPTION PHENOTYPE</scope>
    <scope>DEVELOPMENTAL STAGE</scope>
    <scope>INTERACTION WITH LRP1</scope>
    <scope>GENE FAMILY</scope>
    <scope>NOMENCLATURE</scope>
</reference>
<reference key="7">
    <citation type="journal article" date="2011" name="Plant Physiol.">
        <title>Expression of Arabidopsis SHORT INTERNODES/STYLISH family genes in auxin biosynthesis zones of aerial organs is dependent on a GCC box-like regulatory element.</title>
        <authorList>
            <person name="Eklund D.M."/>
            <person name="Cierlik I."/>
            <person name="Staaldal V."/>
            <person name="Claes A.R."/>
            <person name="Vestman D."/>
            <person name="Chandler J."/>
            <person name="Sundberg E."/>
        </authorList>
    </citation>
    <scope>GENE FAMILY</scope>
</reference>
<comment type="function">
    <text evidence="3 4 5">Transcription activator that binds DNA on 5'-ACTCTAC-3' and promotes auxin homeostasis-regulating gene expression (e.g. YUC genes), as well as genes affecting stamen development, cell expansion and timing of flowering. Synergistically with other SHI-related proteins, regulates gynoecium, stamen and leaf development in a dose-dependent manner, controlling apical-basal patterning. Promotes style and stigma formation, and influences vascular development during gynoecium development. May also have a role in the formation and/or maintenance of the shoot apical meristem (SAM). Suppressor of the gibberellin (GA) signal transduction.</text>
</comment>
<comment type="subunit">
    <text>Forms a heterodimer with LRP1.</text>
</comment>
<comment type="interaction">
    <interactant intactId="EBI-15205274">
        <id>Q9XGX0</id>
    </interactant>
    <interactant intactId="EBI-1536772">
        <id>O04292</id>
        <label>ATHB-9</label>
    </interactant>
    <organismsDiffer>false</organismsDiffer>
    <experiments>3</experiments>
</comment>
<comment type="interaction">
    <interactant intactId="EBI-15205274">
        <id>Q9XGX0</id>
    </interactant>
    <interactant intactId="EBI-15191535">
        <id>O80748</id>
        <label>BBX26</label>
    </interactant>
    <organismsDiffer>false</organismsDiffer>
    <experiments>3</experiments>
</comment>
<comment type="interaction">
    <interactant intactId="EBI-15205274">
        <id>Q9XGX0</id>
    </interactant>
    <interactant intactId="EBI-3946459">
        <id>Q9C5X0</id>
        <label>IAA34</label>
    </interactant>
    <organismsDiffer>false</organismsDiffer>
    <experiments>3</experiments>
</comment>
<comment type="interaction">
    <interactant intactId="EBI-15205274">
        <id>Q9XGX0</id>
    </interactant>
    <interactant intactId="EBI-15193733">
        <id>Q9SI19</id>
        <label>SRS4</label>
    </interactant>
    <organismsDiffer>false</organismsDiffer>
    <experiments>5</experiments>
</comment>
<comment type="interaction">
    <interactant intactId="EBI-15205274">
        <id>Q9XGX0</id>
    </interactant>
    <interactant intactId="EBI-15192325">
        <id>Q8LPR5</id>
        <label>TCP4</label>
    </interactant>
    <organismsDiffer>false</organismsDiffer>
    <experiments>3</experiments>
</comment>
<comment type="subcellular location">
    <subcellularLocation>
        <location evidence="1">Nucleus</location>
    </subcellularLocation>
</comment>
<comment type="tissue specificity">
    <text evidence="3 4">Expressed in young organs such as shoot apices and root tips. Present in roots, stems, flowers, leaves, hydathodes and siliques.</text>
</comment>
<comment type="developmental stage">
    <text evidence="4 5">In germinating seeds, first detected at about 48 h after imbibition. In young seedlings grown in continuous light, present in the root/shoot transition zone, in the apex, and in the apical region of the cotyledons. Later observed in lateral root primordia and in emerging lateral roots, particularly in the root tips, as well as in the shoot apex and in the new leaves, especially in the apical and lateral hydathodes. In adult plants, accumulates in lateral root tips, lateral root primordia, and axillary shoot primordia. In flowers, expressed in the style and stigmatic surface of the pistil and in the receptacle (base) of the flower throughout the development of the pistil until anthesis and later in the silique. Fades out after fertilization.</text>
</comment>
<comment type="disruption phenotype">
    <text evidence="3 4 5">High gibberellin (GA) levels associated with dwarfism, short hypocotyl, narrow leaves, reduced apical dominance, and late flowering, but more flowers.</text>
</comment>
<comment type="similarity">
    <text evidence="6">Belongs to the SHI protein family.</text>
</comment>
<sequence length="331" mass="35377">MAGFFSLGHGGGGNTPDNHRTNTNNPSSSGTESWLWCRNPNSNADGGEAGPSYKGTLELWQHPNNQEIIFQQQQQQQQRLDLYTSAAGLGVGPSNRSLIETSGGALMMMRSGSGSGGPSCQDCGNQSKKDCSHMRCRTCCKSRGLDCPTHVKSTWVPAAKRRERQQQLSTGQQPQQLGGSVPKRQRERIPARSTSMAYTRIPSNNTSGLEVGNFPPEVSSSAVFRCVRVSSVDDEEEEYAYKTAVSIGGHVFKGVLYDQGPAERSSSGGGSQPLNLITAGPSASSSSPNVSCNNGVVGSTSDHYIDPASLNYPTPINTFMTGTHFFSNSRS</sequence>
<evidence type="ECO:0000250" key="1"/>
<evidence type="ECO:0000256" key="2">
    <source>
        <dbReference type="SAM" id="MobiDB-lite"/>
    </source>
</evidence>
<evidence type="ECO:0000269" key="3">
    <source>
    </source>
</evidence>
<evidence type="ECO:0000269" key="4">
    <source>
    </source>
</evidence>
<evidence type="ECO:0000269" key="5">
    <source>
    </source>
</evidence>
<evidence type="ECO:0000305" key="6"/>
<proteinExistence type="evidence at protein level"/>
<name>SHI_ARATH</name>